<keyword id="KW-0007">Acetylation</keyword>
<keyword id="KW-0068">Autocatalytic cleavage</keyword>
<keyword id="KW-0963">Cytoplasm</keyword>
<keyword id="KW-0378">Hydrolase</keyword>
<keyword id="KW-0645">Protease</keyword>
<keyword id="KW-1185">Reference proteome</keyword>
<accession>Q32LE5</accession>
<reference key="1">
    <citation type="submission" date="2005-11" db="EMBL/GenBank/DDBJ databases">
        <authorList>
            <consortium name="NIH - Mammalian Gene Collection (MGC) project"/>
        </authorList>
    </citation>
    <scope>NUCLEOTIDE SEQUENCE [LARGE SCALE MRNA]</scope>
    <source>
        <strain>Crossbred X Angus</strain>
        <tissue>Liver</tissue>
    </source>
</reference>
<comment type="function">
    <text evidence="2">Has both L-asparaginase and beta-aspartyl peptidase activity. May be involved in the production of L-aspartate, which can act as an excitatory neurotransmitter in some brain regions. Is highly active with L-Asp beta-methyl ester. Besides, has catalytic activity toward beta-aspartyl dipeptides and their methyl esters, including beta-L-Asp-L-Phe, beta-L-Asp-L-Phe methyl ester (aspartame), beta-L-Asp-L-Ala, beta-L-Asp-L-Leu and beta-L-Asp-L-Lys. Does not have aspartylglucosaminidase activity and is inactive toward GlcNAc-L-Asn. Likewise, has no activity toward glutamine.</text>
</comment>
<comment type="catalytic activity">
    <reaction evidence="2">
        <text>L-asparagine + H2O = L-aspartate + NH4(+)</text>
        <dbReference type="Rhea" id="RHEA:21016"/>
        <dbReference type="ChEBI" id="CHEBI:15377"/>
        <dbReference type="ChEBI" id="CHEBI:28938"/>
        <dbReference type="ChEBI" id="CHEBI:29991"/>
        <dbReference type="ChEBI" id="CHEBI:58048"/>
        <dbReference type="EC" id="3.5.1.1"/>
    </reaction>
</comment>
<comment type="catalytic activity">
    <reaction evidence="2">
        <text>Cleavage of a beta-linked Asp residue from the N-terminus of a polypeptide.</text>
        <dbReference type="EC" id="3.4.19.5"/>
    </reaction>
</comment>
<comment type="subunit">
    <text evidence="2">Heterodimer of an alpha and beta chain produced by autocleavage. This heterodimer may then dimerize in turn, giving rise to a heterotetramer.</text>
</comment>
<comment type="subcellular location">
    <subcellularLocation>
        <location evidence="2">Cytoplasm</location>
    </subcellularLocation>
    <text evidence="2">Midpiece of sperm tail.</text>
</comment>
<comment type="PTM">
    <text evidence="2">Cleaved into an alpha and beta chain by autocatalysis; this activates the enzyme. The N-terminal residue of the beta subunit is responsible for the nucleophile hydrolase activity.</text>
</comment>
<comment type="similarity">
    <text evidence="3">Belongs to the Ntn-hydrolase family.</text>
</comment>
<sequence>MNPVVVVHGGGASNISKDRKERVRQGILRAATVGYNILKQGGSAVDAVEGAVTVLEDDPDFNAGCGSVLNENGEVEMDASIMNGKDLSAGAVSAVRCIANPIKLARLVMDKTPHCFLTDQGAARFAAANGIPTIPGQQLVTERSRKRLEKEKLEKDAQKPDCQKNLGTVGAVALDCQGNLAYATSTGGIVNKMPGRVGDTPCVGSGGYADNDIGAVSTTGHGESILKVNLARLALFHVEQGKSLEEAANASLGHMKSKVKGVGGIIMVNKAGEWAVKWTSTSMPWAAAKDGKLHSGIDFGDTSIIDLS</sequence>
<dbReference type="EC" id="3.4.19.5" evidence="2"/>
<dbReference type="EC" id="3.5.1.1" evidence="2"/>
<dbReference type="EMBL" id="BC109621">
    <property type="protein sequence ID" value="AAI09622.1"/>
    <property type="molecule type" value="mRNA"/>
</dbReference>
<dbReference type="RefSeq" id="NP_001070503.1">
    <property type="nucleotide sequence ID" value="NM_001077035.2"/>
</dbReference>
<dbReference type="SMR" id="Q32LE5"/>
<dbReference type="FunCoup" id="Q32LE5">
    <property type="interactions" value="618"/>
</dbReference>
<dbReference type="STRING" id="9913.ENSBTAP00000058344"/>
<dbReference type="PaxDb" id="9913-ENSBTAP00000009073"/>
<dbReference type="PeptideAtlas" id="Q32LE5"/>
<dbReference type="GeneID" id="767970"/>
<dbReference type="KEGG" id="bta:767970"/>
<dbReference type="CTD" id="80150"/>
<dbReference type="VEuPathDB" id="HostDB:ENSBTAG00000006910"/>
<dbReference type="eggNOG" id="KOG1592">
    <property type="taxonomic scope" value="Eukaryota"/>
</dbReference>
<dbReference type="HOGENOM" id="CLU_021603_1_2_1"/>
<dbReference type="InParanoid" id="Q32LE5"/>
<dbReference type="OMA" id="MGIIMVD"/>
<dbReference type="OrthoDB" id="2262349at2759"/>
<dbReference type="TreeFam" id="TF323960"/>
<dbReference type="Reactome" id="R-BTA-8964208">
    <property type="pathway name" value="Phenylalanine metabolism"/>
</dbReference>
<dbReference type="Proteomes" id="UP000009136">
    <property type="component" value="Chromosome 29"/>
</dbReference>
<dbReference type="Bgee" id="ENSBTAG00000006910">
    <property type="expression patterns" value="Expressed in blood and 105 other cell types or tissues"/>
</dbReference>
<dbReference type="GO" id="GO:0005737">
    <property type="term" value="C:cytoplasm"/>
    <property type="evidence" value="ECO:0000250"/>
    <property type="project" value="UniProtKB"/>
</dbReference>
<dbReference type="GO" id="GO:0001917">
    <property type="term" value="C:photoreceptor inner segment"/>
    <property type="evidence" value="ECO:0000250"/>
    <property type="project" value="UniProtKB"/>
</dbReference>
<dbReference type="GO" id="GO:0004067">
    <property type="term" value="F:asparaginase activity"/>
    <property type="evidence" value="ECO:0000250"/>
    <property type="project" value="UniProtKB"/>
</dbReference>
<dbReference type="GO" id="GO:0008798">
    <property type="term" value="F:beta-aspartyl-peptidase activity"/>
    <property type="evidence" value="ECO:0000250"/>
    <property type="project" value="UniProtKB"/>
</dbReference>
<dbReference type="GO" id="GO:0033345">
    <property type="term" value="P:asparagine catabolic process via L-aspartate"/>
    <property type="evidence" value="ECO:0000250"/>
    <property type="project" value="UniProtKB"/>
</dbReference>
<dbReference type="GO" id="GO:0006508">
    <property type="term" value="P:proteolysis"/>
    <property type="evidence" value="ECO:0007669"/>
    <property type="project" value="UniProtKB-KW"/>
</dbReference>
<dbReference type="CDD" id="cd04702">
    <property type="entry name" value="ASRGL1_like"/>
    <property type="match status" value="1"/>
</dbReference>
<dbReference type="FunFam" id="3.60.20.30:FF:000001">
    <property type="entry name" value="Isoaspartyl peptidase/L-asparaginase"/>
    <property type="match status" value="1"/>
</dbReference>
<dbReference type="Gene3D" id="3.60.20.30">
    <property type="entry name" value="(Glycosyl)asparaginase"/>
    <property type="match status" value="1"/>
</dbReference>
<dbReference type="InterPro" id="IPR033844">
    <property type="entry name" value="ASRGL1_meta"/>
</dbReference>
<dbReference type="InterPro" id="IPR029055">
    <property type="entry name" value="Ntn_hydrolases_N"/>
</dbReference>
<dbReference type="InterPro" id="IPR000246">
    <property type="entry name" value="Peptidase_T2"/>
</dbReference>
<dbReference type="PANTHER" id="PTHR10188:SF41">
    <property type="entry name" value="ISOASPARTYL PEPTIDASE_L-ASPARAGINASE"/>
    <property type="match status" value="1"/>
</dbReference>
<dbReference type="PANTHER" id="PTHR10188">
    <property type="entry name" value="L-ASPARAGINASE"/>
    <property type="match status" value="1"/>
</dbReference>
<dbReference type="Pfam" id="PF01112">
    <property type="entry name" value="Asparaginase_2"/>
    <property type="match status" value="1"/>
</dbReference>
<dbReference type="SUPFAM" id="SSF56235">
    <property type="entry name" value="N-terminal nucleophile aminohydrolases (Ntn hydrolases)"/>
    <property type="match status" value="1"/>
</dbReference>
<gene>
    <name type="primary">ASRGL1</name>
</gene>
<feature type="chain" id="PRO_0000420554" description="Isoaspartyl peptidase/L-asparaginase alpha chain">
    <location>
        <begin position="1"/>
        <end position="167"/>
    </location>
</feature>
<feature type="chain" id="PRO_0000420555" description="Isoaspartyl peptidase/L-asparaginase beta chain">
    <location>
        <begin position="168"/>
        <end position="308"/>
    </location>
</feature>
<feature type="active site" description="Nucleophile" evidence="1">
    <location>
        <position position="168"/>
    </location>
</feature>
<feature type="binding site" evidence="1">
    <location>
        <begin position="196"/>
        <end position="199"/>
    </location>
    <ligand>
        <name>substrate</name>
    </ligand>
</feature>
<feature type="binding site" evidence="1">
    <location>
        <begin position="219"/>
        <end position="222"/>
    </location>
    <ligand>
        <name>substrate</name>
    </ligand>
</feature>
<feature type="modified residue" description="N-acetylmethionine" evidence="2">
    <location>
        <position position="1"/>
    </location>
</feature>
<organism>
    <name type="scientific">Bos taurus</name>
    <name type="common">Bovine</name>
    <dbReference type="NCBI Taxonomy" id="9913"/>
    <lineage>
        <taxon>Eukaryota</taxon>
        <taxon>Metazoa</taxon>
        <taxon>Chordata</taxon>
        <taxon>Craniata</taxon>
        <taxon>Vertebrata</taxon>
        <taxon>Euteleostomi</taxon>
        <taxon>Mammalia</taxon>
        <taxon>Eutheria</taxon>
        <taxon>Laurasiatheria</taxon>
        <taxon>Artiodactyla</taxon>
        <taxon>Ruminantia</taxon>
        <taxon>Pecora</taxon>
        <taxon>Bovidae</taxon>
        <taxon>Bovinae</taxon>
        <taxon>Bos</taxon>
    </lineage>
</organism>
<proteinExistence type="evidence at transcript level"/>
<evidence type="ECO:0000250" key="1"/>
<evidence type="ECO:0000250" key="2">
    <source>
        <dbReference type="UniProtKB" id="Q7L266"/>
    </source>
</evidence>
<evidence type="ECO:0000305" key="3"/>
<name>ASGL1_BOVIN</name>
<protein>
    <recommendedName>
        <fullName>Isoaspartyl peptidase/L-asparaginase</fullName>
        <ecNumber evidence="2">3.4.19.5</ecNumber>
        <ecNumber evidence="2">3.5.1.1</ecNumber>
    </recommendedName>
    <alternativeName>
        <fullName>Asparaginase-like protein 1</fullName>
    </alternativeName>
    <alternativeName>
        <fullName>Beta-aspartyl-peptidase</fullName>
    </alternativeName>
    <alternativeName>
        <fullName>Isoaspartyl dipeptidase</fullName>
    </alternativeName>
    <alternativeName>
        <fullName>L-asparagine amidohydrolase</fullName>
    </alternativeName>
    <component>
        <recommendedName>
            <fullName>Isoaspartyl peptidase/L-asparaginase alpha chain</fullName>
        </recommendedName>
    </component>
    <component>
        <recommendedName>
            <fullName>Isoaspartyl peptidase/L-asparaginase beta chain</fullName>
        </recommendedName>
    </component>
</protein>